<feature type="signal peptide" evidence="1 2">
    <location>
        <begin position="1"/>
        <end position="21"/>
    </location>
</feature>
<feature type="chain" id="PRO_0000021050" description="Cysteine-rich venom protein 7" evidence="1 2">
    <location>
        <begin position="22"/>
        <end position="109"/>
    </location>
</feature>
<feature type="disulfide bond" evidence="3">
    <location>
        <begin position="30"/>
        <end position="47"/>
    </location>
</feature>
<feature type="disulfide bond" evidence="3">
    <location>
        <begin position="37"/>
        <end position="52"/>
    </location>
</feature>
<feature type="disulfide bond" evidence="3">
    <location>
        <begin position="46"/>
        <end position="58"/>
    </location>
</feature>
<feature type="disulfide bond" evidence="1">
    <location>
        <begin position="70"/>
        <end position="90"/>
    </location>
</feature>
<feature type="disulfide bond" evidence="1">
    <location>
        <begin position="78"/>
        <end position="98"/>
    </location>
</feature>
<protein>
    <recommendedName>
        <fullName>Cysteine-rich venom protein 7</fullName>
        <shortName>cvp7</shortName>
    </recommendedName>
</protein>
<sequence length="109" mass="12101">MSKVFVIILVALMVAISIASAHRPPPNPRCLPGHSKCKYEPKKNSCCLGFQCTERNQCELVYPGHHGKPCGKDNLLGCILPPPTFKPRPCGKYNLKGCKPIRPRPHPHH</sequence>
<proteinExistence type="evidence at protein level"/>
<comment type="subcellular location">
    <subcellularLocation>
        <location evidence="2">Secreted</location>
    </subcellularLocation>
</comment>
<comment type="tissue specificity">
    <text evidence="2">Expressed by the venom gland.</text>
</comment>
<comment type="domain">
    <text evidence="3">The presence of a 'disulfide through disulfide knot' structurally defines this protein as a knottin.</text>
</comment>
<reference evidence="3 4" key="1">
    <citation type="journal article" date="2004" name="Insect Biochem. Mol. Biol.">
        <title>Towards a comprehensive view of the primary structure of venom proteins from the parasitoid wasp Pimpla hypochondriaca.</title>
        <authorList>
            <person name="Parkinson N.M."/>
            <person name="Conyers C."/>
            <person name="Keen J."/>
            <person name="MacNicoll A."/>
            <person name="Smith I."/>
            <person name="Audsley N."/>
            <person name="Weaver R."/>
        </authorList>
    </citation>
    <scope>NUCLEOTIDE SEQUENCE [MRNA]</scope>
    <scope>PROTEIN SEQUENCE OF 22-26</scope>
    <source>
        <tissue evidence="2">Venom</tissue>
        <tissue evidence="2">Venom gland</tissue>
    </source>
</reference>
<dbReference type="EMBL" id="AJ459957">
    <property type="protein sequence ID" value="CAD31108.1"/>
    <property type="molecule type" value="mRNA"/>
</dbReference>
<dbReference type="GO" id="GO:0005576">
    <property type="term" value="C:extracellular region"/>
    <property type="evidence" value="ECO:0007669"/>
    <property type="project" value="UniProtKB-SubCell"/>
</dbReference>
<accession>Q8MMH0</accession>
<evidence type="ECO:0000255" key="1"/>
<evidence type="ECO:0000269" key="2">
    <source>
    </source>
</evidence>
<evidence type="ECO:0000305" key="3"/>
<evidence type="ECO:0000312" key="4">
    <source>
        <dbReference type="EMBL" id="CAD31108.1"/>
    </source>
</evidence>
<organism>
    <name type="scientific">Pimpla hypochondriaca</name>
    <name type="common">Parasitoid wasp</name>
    <dbReference type="NCBI Taxonomy" id="135724"/>
    <lineage>
        <taxon>Eukaryota</taxon>
        <taxon>Metazoa</taxon>
        <taxon>Ecdysozoa</taxon>
        <taxon>Arthropoda</taxon>
        <taxon>Hexapoda</taxon>
        <taxon>Insecta</taxon>
        <taxon>Pterygota</taxon>
        <taxon>Neoptera</taxon>
        <taxon>Endopterygota</taxon>
        <taxon>Hymenoptera</taxon>
        <taxon>Apocrita</taxon>
        <taxon>Ichneumonoidea</taxon>
        <taxon>Ichneumonidae</taxon>
        <taxon>Pimplinae</taxon>
        <taxon>Pimplini</taxon>
        <taxon>Pimpla</taxon>
    </lineage>
</organism>
<keyword id="KW-0903">Direct protein sequencing</keyword>
<keyword id="KW-1015">Disulfide bond</keyword>
<keyword id="KW-0960">Knottin</keyword>
<keyword id="KW-0964">Secreted</keyword>
<keyword id="KW-0732">Signal</keyword>
<name>CVP7_PIMHY</name>